<protein>
    <recommendedName>
        <fullName evidence="1">Pantothenate synthetase</fullName>
        <shortName evidence="1">PS</shortName>
        <ecNumber evidence="1">6.3.2.1</ecNumber>
    </recommendedName>
    <alternativeName>
        <fullName evidence="1">Pantoate--beta-alanine ligase</fullName>
    </alternativeName>
    <alternativeName>
        <fullName evidence="1">Pantoate-activating enzyme</fullName>
    </alternativeName>
</protein>
<gene>
    <name evidence="1" type="primary">panC</name>
    <name type="ordered locus">Chy400_2379</name>
</gene>
<accession>B9LIH9</accession>
<feature type="chain" id="PRO_1000123406" description="Pantothenate synthetase">
    <location>
        <begin position="1"/>
        <end position="281"/>
    </location>
</feature>
<feature type="active site" description="Proton donor" evidence="1">
    <location>
        <position position="33"/>
    </location>
</feature>
<feature type="binding site" evidence="1">
    <location>
        <begin position="26"/>
        <end position="33"/>
    </location>
    <ligand>
        <name>ATP</name>
        <dbReference type="ChEBI" id="CHEBI:30616"/>
    </ligand>
</feature>
<feature type="binding site" evidence="1">
    <location>
        <position position="57"/>
    </location>
    <ligand>
        <name>(R)-pantoate</name>
        <dbReference type="ChEBI" id="CHEBI:15980"/>
    </ligand>
</feature>
<feature type="binding site" evidence="1">
    <location>
        <position position="57"/>
    </location>
    <ligand>
        <name>beta-alanine</name>
        <dbReference type="ChEBI" id="CHEBI:57966"/>
    </ligand>
</feature>
<feature type="binding site" evidence="1">
    <location>
        <begin position="143"/>
        <end position="146"/>
    </location>
    <ligand>
        <name>ATP</name>
        <dbReference type="ChEBI" id="CHEBI:30616"/>
    </ligand>
</feature>
<feature type="binding site" evidence="1">
    <location>
        <position position="149"/>
    </location>
    <ligand>
        <name>(R)-pantoate</name>
        <dbReference type="ChEBI" id="CHEBI:15980"/>
    </ligand>
</feature>
<feature type="binding site" evidence="1">
    <location>
        <position position="172"/>
    </location>
    <ligand>
        <name>ATP</name>
        <dbReference type="ChEBI" id="CHEBI:30616"/>
    </ligand>
</feature>
<feature type="binding site" evidence="1">
    <location>
        <begin position="180"/>
        <end position="183"/>
    </location>
    <ligand>
        <name>ATP</name>
        <dbReference type="ChEBI" id="CHEBI:30616"/>
    </ligand>
</feature>
<evidence type="ECO:0000255" key="1">
    <source>
        <dbReference type="HAMAP-Rule" id="MF_00158"/>
    </source>
</evidence>
<proteinExistence type="inferred from homology"/>
<keyword id="KW-0067">ATP-binding</keyword>
<keyword id="KW-0963">Cytoplasm</keyword>
<keyword id="KW-0436">Ligase</keyword>
<keyword id="KW-0547">Nucleotide-binding</keyword>
<keyword id="KW-0566">Pantothenate biosynthesis</keyword>
<name>PANC_CHLSY</name>
<reference key="1">
    <citation type="submission" date="2009-01" db="EMBL/GenBank/DDBJ databases">
        <title>Complete sequence of Chloroflexus sp. Y-400-fl.</title>
        <authorList>
            <consortium name="US DOE Joint Genome Institute"/>
            <person name="Lucas S."/>
            <person name="Copeland A."/>
            <person name="Lapidus A."/>
            <person name="Glavina del Rio T."/>
            <person name="Dalin E."/>
            <person name="Tice H."/>
            <person name="Bruce D."/>
            <person name="Goodwin L."/>
            <person name="Pitluck S."/>
            <person name="Sims D."/>
            <person name="Kiss H."/>
            <person name="Brettin T."/>
            <person name="Detter J.C."/>
            <person name="Han C."/>
            <person name="Larimer F."/>
            <person name="Land M."/>
            <person name="Hauser L."/>
            <person name="Kyrpides N."/>
            <person name="Ovchinnikova G."/>
            <person name="Bryant D.A."/>
            <person name="Richardson P."/>
        </authorList>
    </citation>
    <scope>NUCLEOTIDE SEQUENCE [LARGE SCALE GENOMIC DNA]</scope>
    <source>
        <strain>ATCC 29364 / DSM 637 / Y-400-fl</strain>
    </source>
</reference>
<sequence length="281" mass="31012">MKVLHTVAEFRQARAAFDVLGFVPTMGYLHQGHLALVEQARRECPAVAVSIFVNPTQFGPNEDYARYPRDTNRDLALLEAAGVDLVFIPSVEEMYPPGFGTYVIQPAADEVLEGAARPGHFRGVATVVCKLFNIVQPTKSYFGQKDAQQTVVVRQMVRDLNLPVEIVIVPTVREPDGLALSSRNVYLNAEQRAAAPVLYRALRTAAERYAAGERDAETLRAVMRSVLAGEPLARPDYVSVAHPLTLRELDRIGADGALLSMAVRFDQVRLIDNWLLEGEGK</sequence>
<comment type="function">
    <text evidence="1">Catalyzes the condensation of pantoate with beta-alanine in an ATP-dependent reaction via a pantoyl-adenylate intermediate.</text>
</comment>
<comment type="catalytic activity">
    <reaction evidence="1">
        <text>(R)-pantoate + beta-alanine + ATP = (R)-pantothenate + AMP + diphosphate + H(+)</text>
        <dbReference type="Rhea" id="RHEA:10912"/>
        <dbReference type="ChEBI" id="CHEBI:15378"/>
        <dbReference type="ChEBI" id="CHEBI:15980"/>
        <dbReference type="ChEBI" id="CHEBI:29032"/>
        <dbReference type="ChEBI" id="CHEBI:30616"/>
        <dbReference type="ChEBI" id="CHEBI:33019"/>
        <dbReference type="ChEBI" id="CHEBI:57966"/>
        <dbReference type="ChEBI" id="CHEBI:456215"/>
        <dbReference type="EC" id="6.3.2.1"/>
    </reaction>
</comment>
<comment type="pathway">
    <text evidence="1">Cofactor biosynthesis; (R)-pantothenate biosynthesis; (R)-pantothenate from (R)-pantoate and beta-alanine: step 1/1.</text>
</comment>
<comment type="subunit">
    <text evidence="1">Homodimer.</text>
</comment>
<comment type="subcellular location">
    <subcellularLocation>
        <location evidence="1">Cytoplasm</location>
    </subcellularLocation>
</comment>
<comment type="miscellaneous">
    <text evidence="1">The reaction proceeds by a bi uni uni bi ping pong mechanism.</text>
</comment>
<comment type="similarity">
    <text evidence="1">Belongs to the pantothenate synthetase family.</text>
</comment>
<organism>
    <name type="scientific">Chloroflexus aurantiacus (strain ATCC 29364 / DSM 637 / Y-400-fl)</name>
    <dbReference type="NCBI Taxonomy" id="480224"/>
    <lineage>
        <taxon>Bacteria</taxon>
        <taxon>Bacillati</taxon>
        <taxon>Chloroflexota</taxon>
        <taxon>Chloroflexia</taxon>
        <taxon>Chloroflexales</taxon>
        <taxon>Chloroflexineae</taxon>
        <taxon>Chloroflexaceae</taxon>
        <taxon>Chloroflexus</taxon>
    </lineage>
</organism>
<dbReference type="EC" id="6.3.2.1" evidence="1"/>
<dbReference type="EMBL" id="CP001364">
    <property type="protein sequence ID" value="ACM53773.1"/>
    <property type="molecule type" value="Genomic_DNA"/>
</dbReference>
<dbReference type="SMR" id="B9LIH9"/>
<dbReference type="KEGG" id="chl:Chy400_2379"/>
<dbReference type="HOGENOM" id="CLU_047148_0_0_0"/>
<dbReference type="OrthoDB" id="9773087at2"/>
<dbReference type="UniPathway" id="UPA00028">
    <property type="reaction ID" value="UER00005"/>
</dbReference>
<dbReference type="GO" id="GO:0005829">
    <property type="term" value="C:cytosol"/>
    <property type="evidence" value="ECO:0007669"/>
    <property type="project" value="TreeGrafter"/>
</dbReference>
<dbReference type="GO" id="GO:0005524">
    <property type="term" value="F:ATP binding"/>
    <property type="evidence" value="ECO:0007669"/>
    <property type="project" value="UniProtKB-KW"/>
</dbReference>
<dbReference type="GO" id="GO:0004592">
    <property type="term" value="F:pantoate-beta-alanine ligase activity"/>
    <property type="evidence" value="ECO:0007669"/>
    <property type="project" value="UniProtKB-UniRule"/>
</dbReference>
<dbReference type="GO" id="GO:0015940">
    <property type="term" value="P:pantothenate biosynthetic process"/>
    <property type="evidence" value="ECO:0007669"/>
    <property type="project" value="UniProtKB-UniRule"/>
</dbReference>
<dbReference type="CDD" id="cd00560">
    <property type="entry name" value="PanC"/>
    <property type="match status" value="1"/>
</dbReference>
<dbReference type="FunFam" id="3.30.1300.10:FF:000007">
    <property type="entry name" value="Pantothenate synthetase"/>
    <property type="match status" value="1"/>
</dbReference>
<dbReference type="FunFam" id="3.40.50.620:FF:000013">
    <property type="entry name" value="Pantothenate synthetase"/>
    <property type="match status" value="1"/>
</dbReference>
<dbReference type="Gene3D" id="3.40.50.620">
    <property type="entry name" value="HUPs"/>
    <property type="match status" value="1"/>
</dbReference>
<dbReference type="Gene3D" id="3.30.1300.10">
    <property type="entry name" value="Pantoate-beta-alanine ligase, C-terminal domain"/>
    <property type="match status" value="1"/>
</dbReference>
<dbReference type="HAMAP" id="MF_00158">
    <property type="entry name" value="PanC"/>
    <property type="match status" value="1"/>
</dbReference>
<dbReference type="InterPro" id="IPR004821">
    <property type="entry name" value="Cyt_trans-like"/>
</dbReference>
<dbReference type="InterPro" id="IPR003721">
    <property type="entry name" value="Pantoate_ligase"/>
</dbReference>
<dbReference type="InterPro" id="IPR042176">
    <property type="entry name" value="Pantoate_ligase_C"/>
</dbReference>
<dbReference type="InterPro" id="IPR014729">
    <property type="entry name" value="Rossmann-like_a/b/a_fold"/>
</dbReference>
<dbReference type="NCBIfam" id="TIGR00125">
    <property type="entry name" value="cyt_tran_rel"/>
    <property type="match status" value="1"/>
</dbReference>
<dbReference type="NCBIfam" id="TIGR00018">
    <property type="entry name" value="panC"/>
    <property type="match status" value="1"/>
</dbReference>
<dbReference type="PANTHER" id="PTHR21299">
    <property type="entry name" value="CYTIDYLATE KINASE/PANTOATE-BETA-ALANINE LIGASE"/>
    <property type="match status" value="1"/>
</dbReference>
<dbReference type="PANTHER" id="PTHR21299:SF1">
    <property type="entry name" value="PANTOATE--BETA-ALANINE LIGASE"/>
    <property type="match status" value="1"/>
</dbReference>
<dbReference type="Pfam" id="PF02569">
    <property type="entry name" value="Pantoate_ligase"/>
    <property type="match status" value="1"/>
</dbReference>
<dbReference type="SUPFAM" id="SSF52374">
    <property type="entry name" value="Nucleotidylyl transferase"/>
    <property type="match status" value="1"/>
</dbReference>